<gene>
    <name type="primary">araD</name>
</gene>
<keyword id="KW-0002">3D-structure</keyword>
<keyword id="KW-0054">Arabinose catabolism</keyword>
<keyword id="KW-0119">Carbohydrate metabolism</keyword>
<keyword id="KW-0903">Direct protein sequencing</keyword>
<keyword id="KW-0456">Lyase</keyword>
<protein>
    <recommendedName>
        <fullName>L-2-keto-3-deoxyarabonate dehydratase</fullName>
        <shortName>L-KDA dehydratase</shortName>
        <ecNumber>4.2.1.43</ecNumber>
    </recommendedName>
    <alternativeName>
        <fullName>2-dehydro-3-deoxy-L-arabinonate dehydratase</fullName>
    </alternativeName>
    <alternativeName>
        <fullName>L-2-keto-3-deoxyarabinonate dehydratase</fullName>
    </alternativeName>
</protein>
<sequence>MTSSSTPRHRGIFPVVPTTFADTGELDLASQKRAVDFMIDAGSDGLCILANFSEQFAITDDERDVLTRTILEHVAGRVPVIVTTSHYSTQVCAARSLRAQQLGAAMVMAMPPYHGATFRVPEAQIFEFYARVSDAIAIPIMVQDAPASGTALSAPFLARMAREIEQVAYFKIETPGAANKLRELIRLGGDAIEGPWDGEEAITLLADLHAGATGAMTGGGFPDGIRPILEAWREGRHDDAYARYQAWLPLINHENRQSGILTAKALMREGGVIASERPRHPMPELHPDTRAELLAIARRLDPLVLRWAH</sequence>
<evidence type="ECO:0000250" key="1"/>
<evidence type="ECO:0000269" key="2">
    <source>
    </source>
</evidence>
<evidence type="ECO:0000269" key="3">
    <source>
    </source>
</evidence>
<evidence type="ECO:0000269" key="4">
    <source ref="4"/>
</evidence>
<evidence type="ECO:0000305" key="5"/>
<evidence type="ECO:0007829" key="6">
    <source>
        <dbReference type="PDB" id="3FKR"/>
    </source>
</evidence>
<evidence type="ECO:0007829" key="7">
    <source>
        <dbReference type="PDB" id="7C0D"/>
    </source>
</evidence>
<name>KDADA_AZOBR</name>
<proteinExistence type="evidence at protein level"/>
<accession>Q1JUQ0</accession>
<reference key="1">
    <citation type="journal article" date="2006" name="J. Biol. Chem.">
        <title>Identification and characterization of L-arabonate dehydratase, L-2-keto-3-deoxyarabonate dehydratase and L-arabinolactonase involved in an alternative pathway of L-arabinose metabolism: novel evolutionary insight into sugar metabolism.</title>
        <authorList>
            <person name="Watanabe S."/>
            <person name="Shimada N."/>
            <person name="Tajima K."/>
            <person name="Kodaki T."/>
            <person name="Makino K."/>
        </authorList>
    </citation>
    <scope>NUCLEOTIDE SEQUENCE [GENOMIC DNA]</scope>
    <scope>PROTEIN SEQUENCE OF 2-21</scope>
    <scope>FUNCTION</scope>
    <scope>CATALYTIC ACTIVITY</scope>
    <scope>SUBUNIT</scope>
    <scope>PATHWAY</scope>
    <scope>MUTAGENESIS OF GLN-143</scope>
    <source>
        <strain>ATCC 29145 / DSM 1690 / IMET 11303 / Sp7</strain>
    </source>
</reference>
<reference key="2">
    <citation type="journal article" date="1982" name="J. Bacteriol.">
        <title>L-arabinose metabolism in Azospirillum brasiliense.</title>
        <authorList>
            <person name="Novick N.J."/>
            <person name="Tyler M.E."/>
        </authorList>
    </citation>
    <scope>PATHWAY</scope>
    <source>
        <strain>ATCC 29145 / DSM 1690 / IMET 11303 / Sp7</strain>
    </source>
</reference>
<reference key="3">
    <citation type="journal article" date="2007" name="Acta Crystallogr. F">
        <title>Preliminary crystallographic analysis of L-2-keto-3-deoxyarabonate dehydratase, an enzyme involved in an alternative bacterial pathway of L-arabinose metabolism.</title>
        <authorList>
            <person name="Shimada N."/>
            <person name="Mikami B."/>
            <person name="Watanabe S."/>
            <person name="Makino K."/>
        </authorList>
    </citation>
    <scope>CRYSTALLIZATION</scope>
    <scope>CATALYTIC ACTIVITY</scope>
    <scope>SUBUNIT</scope>
</reference>
<reference key="4">
    <citation type="submission" date="2008-12" db="PDB data bank">
        <title>Structural analysis of L-2-keto-3-deoxyarabonate dehydratase an enzyme involved in an alternative bacterial pathway of L-arabinose metabolism in complex with pyruvate.</title>
        <authorList>
            <person name="Shimada N."/>
            <person name="Mikami B."/>
            <person name="Watanabe S."/>
            <person name="Kodaki T."/>
            <person name="Makino K."/>
        </authorList>
    </citation>
    <scope>X-RAY CRYSTALLOGRAPHY (1.80 ANGSTROMS)</scope>
    <scope>SUBUNIT</scope>
</reference>
<feature type="initiator methionine" description="Removed" evidence="2">
    <location>
        <position position="1"/>
    </location>
</feature>
<feature type="chain" id="PRO_0000418507" description="L-2-keto-3-deoxyarabonate dehydratase">
    <location>
        <begin position="2"/>
        <end position="309"/>
    </location>
</feature>
<feature type="active site" description="Schiff-base intermediate with substrate" evidence="1">
    <location>
        <position position="171"/>
    </location>
</feature>
<feature type="mutagenesis site" description="Loss of activity." evidence="2">
    <original>Q</original>
    <variation>N</variation>
    <variation>E</variation>
    <variation>S</variation>
    <variation>T</variation>
    <variation>Y</variation>
    <location>
        <position position="143"/>
    </location>
</feature>
<feature type="strand" evidence="7">
    <location>
        <begin position="24"/>
        <end position="26"/>
    </location>
</feature>
<feature type="helix" evidence="7">
    <location>
        <begin position="28"/>
        <end position="40"/>
    </location>
</feature>
<feature type="strand" evidence="7">
    <location>
        <begin position="46"/>
        <end position="50"/>
    </location>
</feature>
<feature type="helix" evidence="7">
    <location>
        <begin position="51"/>
        <end position="53"/>
    </location>
</feature>
<feature type="helix" evidence="7">
    <location>
        <begin position="55"/>
        <end position="57"/>
    </location>
</feature>
<feature type="helix" evidence="7">
    <location>
        <begin position="60"/>
        <end position="74"/>
    </location>
</feature>
<feature type="strand" evidence="7">
    <location>
        <begin position="80"/>
        <end position="83"/>
    </location>
</feature>
<feature type="helix" evidence="7">
    <location>
        <begin position="89"/>
        <end position="101"/>
    </location>
</feature>
<feature type="strand" evidence="7">
    <location>
        <begin position="105"/>
        <end position="109"/>
    </location>
</feature>
<feature type="turn" evidence="7">
    <location>
        <begin position="115"/>
        <end position="117"/>
    </location>
</feature>
<feature type="helix" evidence="7">
    <location>
        <begin position="122"/>
        <end position="135"/>
    </location>
</feature>
<feature type="strand" evidence="7">
    <location>
        <begin position="140"/>
        <end position="144"/>
    </location>
</feature>
<feature type="helix" evidence="7">
    <location>
        <begin position="146"/>
        <end position="148"/>
    </location>
</feature>
<feature type="helix" evidence="7">
    <location>
        <begin position="154"/>
        <end position="163"/>
    </location>
</feature>
<feature type="strand" evidence="7">
    <location>
        <begin position="167"/>
        <end position="172"/>
    </location>
</feature>
<feature type="strand" evidence="6">
    <location>
        <begin position="174"/>
        <end position="176"/>
    </location>
</feature>
<feature type="helix" evidence="7">
    <location>
        <begin position="177"/>
        <end position="188"/>
    </location>
</feature>
<feature type="helix" evidence="7">
    <location>
        <begin position="189"/>
        <end position="191"/>
    </location>
</feature>
<feature type="strand" evidence="7">
    <location>
        <begin position="193"/>
        <end position="197"/>
    </location>
</feature>
<feature type="helix" evidence="7">
    <location>
        <begin position="199"/>
        <end position="201"/>
    </location>
</feature>
<feature type="helix" evidence="7">
    <location>
        <begin position="204"/>
        <end position="209"/>
    </location>
</feature>
<feature type="helix" evidence="7">
    <location>
        <begin position="222"/>
        <end position="233"/>
    </location>
</feature>
<feature type="helix" evidence="7">
    <location>
        <begin position="237"/>
        <end position="256"/>
    </location>
</feature>
<feature type="helix" evidence="7">
    <location>
        <begin position="259"/>
        <end position="261"/>
    </location>
</feature>
<feature type="helix" evidence="7">
    <location>
        <begin position="262"/>
        <end position="269"/>
    </location>
</feature>
<feature type="strand" evidence="7">
    <location>
        <begin position="272"/>
        <end position="274"/>
    </location>
</feature>
<feature type="helix" evidence="7">
    <location>
        <begin position="287"/>
        <end position="300"/>
    </location>
</feature>
<feature type="helix" evidence="7">
    <location>
        <begin position="303"/>
        <end position="305"/>
    </location>
</feature>
<dbReference type="EC" id="4.2.1.43"/>
<dbReference type="EMBL" id="AB241136">
    <property type="protein sequence ID" value="BAE94270.1"/>
    <property type="molecule type" value="Genomic_DNA"/>
</dbReference>
<dbReference type="PDB" id="3FKK">
    <property type="method" value="X-ray"/>
    <property type="resolution" value="2.10 A"/>
    <property type="chains" value="A/B=1-309"/>
</dbReference>
<dbReference type="PDB" id="3FKR">
    <property type="method" value="X-ray"/>
    <property type="resolution" value="1.80 A"/>
    <property type="chains" value="A/B=1-309"/>
</dbReference>
<dbReference type="PDB" id="7C0C">
    <property type="method" value="X-ray"/>
    <property type="resolution" value="1.90 A"/>
    <property type="chains" value="A/B/C/D/E/F/G/H/I/J/K/L=2-309"/>
</dbReference>
<dbReference type="PDB" id="7C0D">
    <property type="method" value="X-ray"/>
    <property type="resolution" value="1.60 A"/>
    <property type="chains" value="A/B/C/D/E/F/G/H/I/J/K/L=2-309"/>
</dbReference>
<dbReference type="PDB" id="7C0E">
    <property type="method" value="X-ray"/>
    <property type="resolution" value="2.20 A"/>
    <property type="chains" value="A/B/C/D/E/F/G/H/I/J/K/L=2-309"/>
</dbReference>
<dbReference type="PDBsum" id="3FKK"/>
<dbReference type="PDBsum" id="3FKR"/>
<dbReference type="PDBsum" id="7C0C"/>
<dbReference type="PDBsum" id="7C0D"/>
<dbReference type="PDBsum" id="7C0E"/>
<dbReference type="SMR" id="Q1JUQ0"/>
<dbReference type="BRENDA" id="4.2.1.43">
    <property type="organism ID" value="611"/>
</dbReference>
<dbReference type="EvolutionaryTrace" id="Q1JUQ0"/>
<dbReference type="GO" id="GO:0005829">
    <property type="term" value="C:cytosol"/>
    <property type="evidence" value="ECO:0007669"/>
    <property type="project" value="TreeGrafter"/>
</dbReference>
<dbReference type="GO" id="GO:0047449">
    <property type="term" value="F:2-dehydro-3-deoxy-L-arabinonate dehydratase activity"/>
    <property type="evidence" value="ECO:0000314"/>
    <property type="project" value="UniProtKB"/>
</dbReference>
<dbReference type="GO" id="GO:0008840">
    <property type="term" value="F:4-hydroxy-tetrahydrodipicolinate synthase activity"/>
    <property type="evidence" value="ECO:0007669"/>
    <property type="project" value="TreeGrafter"/>
</dbReference>
<dbReference type="GO" id="GO:0042803">
    <property type="term" value="F:protein homodimerization activity"/>
    <property type="evidence" value="ECO:0000314"/>
    <property type="project" value="UniProtKB"/>
</dbReference>
<dbReference type="GO" id="GO:0019570">
    <property type="term" value="P:L-arabinose catabolic process to 2-oxoglutarate"/>
    <property type="evidence" value="ECO:0000314"/>
    <property type="project" value="UniProtKB"/>
</dbReference>
<dbReference type="CDD" id="cd00408">
    <property type="entry name" value="DHDPS-like"/>
    <property type="match status" value="1"/>
</dbReference>
<dbReference type="FunFam" id="3.20.20.70:FF:000408">
    <property type="entry name" value="L-2-keto-3-deoxyarabonate dehydratase"/>
    <property type="match status" value="1"/>
</dbReference>
<dbReference type="Gene3D" id="3.20.20.70">
    <property type="entry name" value="Aldolase class I"/>
    <property type="match status" value="1"/>
</dbReference>
<dbReference type="InterPro" id="IPR013785">
    <property type="entry name" value="Aldolase_TIM"/>
</dbReference>
<dbReference type="InterPro" id="IPR002220">
    <property type="entry name" value="DapA-like"/>
</dbReference>
<dbReference type="PANTHER" id="PTHR12128:SF66">
    <property type="entry name" value="4-HYDROXY-2-OXOGLUTARATE ALDOLASE, MITOCHONDRIAL"/>
    <property type="match status" value="1"/>
</dbReference>
<dbReference type="PANTHER" id="PTHR12128">
    <property type="entry name" value="DIHYDRODIPICOLINATE SYNTHASE"/>
    <property type="match status" value="1"/>
</dbReference>
<dbReference type="Pfam" id="PF00701">
    <property type="entry name" value="DHDPS"/>
    <property type="match status" value="1"/>
</dbReference>
<dbReference type="PIRSF" id="PIRSF001365">
    <property type="entry name" value="DHDPS"/>
    <property type="match status" value="1"/>
</dbReference>
<dbReference type="SMART" id="SM01130">
    <property type="entry name" value="DHDPS"/>
    <property type="match status" value="1"/>
</dbReference>
<dbReference type="SUPFAM" id="SSF51569">
    <property type="entry name" value="Aldolase"/>
    <property type="match status" value="1"/>
</dbReference>
<organism>
    <name type="scientific">Azospirillum brasilense</name>
    <dbReference type="NCBI Taxonomy" id="192"/>
    <lineage>
        <taxon>Bacteria</taxon>
        <taxon>Pseudomonadati</taxon>
        <taxon>Pseudomonadota</taxon>
        <taxon>Alphaproteobacteria</taxon>
        <taxon>Rhodospirillales</taxon>
        <taxon>Azospirillaceae</taxon>
        <taxon>Azospirillum</taxon>
    </lineage>
</organism>
<comment type="function">
    <text evidence="2">Catalyzes the dehydration of L-2-keto-3-deoxyarabonate (L-KDA) to alpha-ketoglutaric semialdehyde (alphaKGSA). Is involved in a degradation pathway of L-arabinose that allows A.brasilense to grow on L-arabinose as a sole carbon source.</text>
</comment>
<comment type="catalytic activity">
    <reaction evidence="2 3">
        <text>2-dehydro-3-deoxy-L-arabinonate = 2,5-dioxopentanoate + H2O</text>
        <dbReference type="Rhea" id="RHEA:17201"/>
        <dbReference type="ChEBI" id="CHEBI:15377"/>
        <dbReference type="ChEBI" id="CHEBI:35173"/>
        <dbReference type="ChEBI" id="CHEBI:58136"/>
        <dbReference type="EC" id="4.2.1.43"/>
    </reaction>
</comment>
<comment type="subunit">
    <text evidence="2 3 4">Homodimer.</text>
</comment>
<comment type="similarity">
    <text evidence="5">Belongs to the DapA family.</text>
</comment>